<name>PACE1_HUMAN</name>
<gene>
    <name type="primary">SCYL3</name>
    <name type="synonym">PACE1</name>
</gene>
<protein>
    <recommendedName>
        <fullName>Protein-associating with the carboxyl-terminal domain of ezrin</fullName>
    </recommendedName>
    <alternativeName>
        <fullName>Ezrin-binding protein PACE-1</fullName>
    </alternativeName>
    <alternativeName>
        <fullName>SCY1-like protein 3</fullName>
    </alternativeName>
</protein>
<keyword id="KW-0025">Alternative splicing</keyword>
<keyword id="KW-0966">Cell projection</keyword>
<keyword id="KW-0963">Cytoplasm</keyword>
<keyword id="KW-0333">Golgi apparatus</keyword>
<keyword id="KW-0449">Lipoprotein</keyword>
<keyword id="KW-0519">Myristate</keyword>
<keyword id="KW-0597">Phosphoprotein</keyword>
<keyword id="KW-1267">Proteomics identification</keyword>
<keyword id="KW-1185">Reference proteome</keyword>
<keyword id="KW-0677">Repeat</keyword>
<comment type="function">
    <text evidence="4">May play a role in regulating cell adhesion/migration complexes in migrating cells.</text>
</comment>
<comment type="subunit">
    <text evidence="4">Interacts with EZR/VIL2 C-terminal domain.</text>
</comment>
<comment type="interaction">
    <interactant intactId="EBI-1380680">
        <id>Q8IZE3</id>
    </interactant>
    <interactant intactId="EBI-1056902">
        <id>P15311</id>
        <label>EZR</label>
    </interactant>
    <organismsDiffer>false</organismsDiffer>
    <experiments>5</experiments>
</comment>
<comment type="interaction">
    <interactant intactId="EBI-1380680">
        <id>Q8IZE3</id>
    </interactant>
    <interactant intactId="EBI-746969">
        <id>Q9H0R8</id>
        <label>GABARAPL1</label>
    </interactant>
    <organismsDiffer>false</organismsDiffer>
    <experiments>3</experiments>
</comment>
<comment type="interaction">
    <interactant intactId="EBI-1380680">
        <id>Q8IZE3</id>
    </interactant>
    <interactant intactId="EBI-8474075">
        <id>Q68G74</id>
        <label>LHX8</label>
    </interactant>
    <organismsDiffer>false</organismsDiffer>
    <experiments>3</experiments>
</comment>
<comment type="interaction">
    <interactant intactId="EBI-1380680">
        <id>Q8IZE3</id>
    </interactant>
    <interactant intactId="EBI-2932492">
        <id>Q99757</id>
        <label>TXN2</label>
    </interactant>
    <organismsDiffer>false</organismsDiffer>
    <experiments>4</experiments>
</comment>
<comment type="interaction">
    <interactant intactId="EBI-11959369">
        <id>Q8IZE3-2</id>
    </interactant>
    <interactant intactId="EBI-746969">
        <id>Q9H0R8</id>
        <label>GABARAPL1</label>
    </interactant>
    <organismsDiffer>false</organismsDiffer>
    <experiments>4</experiments>
</comment>
<comment type="interaction">
    <interactant intactId="EBI-11959369">
        <id>Q8IZE3-2</id>
    </interactant>
    <interactant intactId="EBI-720116">
        <id>P60520</id>
        <label>GABARAPL2</label>
    </interactant>
    <organismsDiffer>false</organismsDiffer>
    <experiments>4</experiments>
</comment>
<comment type="interaction">
    <interactant intactId="EBI-11959369">
        <id>Q8IZE3-2</id>
    </interactant>
    <interactant intactId="EBI-1055254">
        <id>Q8WXH2</id>
        <label>JPH3</label>
    </interactant>
    <organismsDiffer>false</organismsDiffer>
    <experiments>3</experiments>
</comment>
<comment type="interaction">
    <interactant intactId="EBI-11959369">
        <id>Q8IZE3-2</id>
    </interactant>
    <interactant intactId="EBI-11974855">
        <id>Q9Y4C2-2</id>
        <label>TCAF1</label>
    </interactant>
    <organismsDiffer>false</organismsDiffer>
    <experiments>3</experiments>
</comment>
<comment type="interaction">
    <interactant intactId="EBI-11959369">
        <id>Q8IZE3-2</id>
    </interactant>
    <interactant intactId="EBI-2932492">
        <id>Q99757</id>
        <label>TXN2</label>
    </interactant>
    <organismsDiffer>false</organismsDiffer>
    <experiments>3</experiments>
</comment>
<comment type="subcellular location">
    <subcellularLocation>
        <location evidence="4">Cytoplasm</location>
    </subcellularLocation>
    <subcellularLocation>
        <location evidence="4">Golgi apparatus</location>
    </subcellularLocation>
    <subcellularLocation>
        <location evidence="4">Cell projection</location>
        <location evidence="4">Lamellipodium</location>
    </subcellularLocation>
    <text>Colocalized with EZR/VIL2, actin and CD44 in lamellipodia.</text>
</comment>
<comment type="alternative products">
    <event type="alternative splicing"/>
    <isoform>
        <id>Q8IZE3-1</id>
        <name>1</name>
        <sequence type="displayed"/>
    </isoform>
    <isoform>
        <id>Q8IZE3-2</id>
        <name>2</name>
        <sequence type="described" ref="VSP_013125"/>
    </isoform>
</comment>
<comment type="tissue specificity">
    <text evidence="4">Ubiquitously expressed.</text>
</comment>
<comment type="domain">
    <text>The protein kinase domain is predicted to be catalytically inactive.</text>
</comment>
<comment type="PTM">
    <text evidence="4">May be myristoylated; myristoylation may target it to Golgi compartment.</text>
</comment>
<comment type="PTM">
    <text evidence="4">Phosphorylated.</text>
</comment>
<comment type="similarity">
    <text evidence="11">Belongs to the protein kinase superfamily.</text>
</comment>
<dbReference type="EMBL" id="AF540957">
    <property type="protein sequence ID" value="AAN23123.1"/>
    <property type="molecule type" value="mRNA"/>
</dbReference>
<dbReference type="EMBL" id="AY144493">
    <property type="protein sequence ID" value="AAN41656.1"/>
    <property type="molecule type" value="mRNA"/>
</dbReference>
<dbReference type="EMBL" id="AL117233">
    <property type="protein sequence ID" value="CAB55300.1"/>
    <property type="molecule type" value="mRNA"/>
</dbReference>
<dbReference type="EMBL" id="AK292507">
    <property type="protein sequence ID" value="BAF85196.1"/>
    <property type="molecule type" value="mRNA"/>
</dbReference>
<dbReference type="EMBL" id="AL031297">
    <property type="status" value="NOT_ANNOTATED_CDS"/>
    <property type="molecule type" value="Genomic_DNA"/>
</dbReference>
<dbReference type="EMBL" id="CH471067">
    <property type="protein sequence ID" value="EAW90867.1"/>
    <property type="molecule type" value="Genomic_DNA"/>
</dbReference>
<dbReference type="EMBL" id="BC014662">
    <property type="protein sequence ID" value="AAH14662.1"/>
    <property type="molecule type" value="mRNA"/>
</dbReference>
<dbReference type="CCDS" id="CCDS1286.1">
    <molecule id="Q8IZE3-2"/>
</dbReference>
<dbReference type="CCDS" id="CCDS1287.1">
    <molecule id="Q8IZE3-1"/>
</dbReference>
<dbReference type="RefSeq" id="NP_065156.5">
    <molecule id="Q8IZE3-2"/>
    <property type="nucleotide sequence ID" value="NM_020423.6"/>
</dbReference>
<dbReference type="RefSeq" id="NP_851607.2">
    <molecule id="Q8IZE3-1"/>
    <property type="nucleotide sequence ID" value="NM_181093.4"/>
</dbReference>
<dbReference type="RefSeq" id="XP_006711528.1">
    <molecule id="Q8IZE3-1"/>
    <property type="nucleotide sequence ID" value="XM_006711465.2"/>
</dbReference>
<dbReference type="RefSeq" id="XP_011508103.1">
    <molecule id="Q8IZE3-1"/>
    <property type="nucleotide sequence ID" value="XM_011509801.2"/>
</dbReference>
<dbReference type="RefSeq" id="XP_016857351.1">
    <molecule id="Q8IZE3-2"/>
    <property type="nucleotide sequence ID" value="XM_017001862.2"/>
</dbReference>
<dbReference type="RefSeq" id="XP_016857352.1">
    <molecule id="Q8IZE3-2"/>
    <property type="nucleotide sequence ID" value="XM_017001863.2"/>
</dbReference>
<dbReference type="SMR" id="Q8IZE3"/>
<dbReference type="BioGRID" id="121404">
    <property type="interactions" value="113"/>
</dbReference>
<dbReference type="FunCoup" id="Q8IZE3">
    <property type="interactions" value="2141"/>
</dbReference>
<dbReference type="IntAct" id="Q8IZE3">
    <property type="interactions" value="70"/>
</dbReference>
<dbReference type="MINT" id="Q8IZE3"/>
<dbReference type="STRING" id="9606.ENSP00000356746"/>
<dbReference type="GlyGen" id="Q8IZE3">
    <property type="glycosylation" value="1 site, 1 O-linked glycan (1 site)"/>
</dbReference>
<dbReference type="iPTMnet" id="Q8IZE3"/>
<dbReference type="PhosphoSitePlus" id="Q8IZE3"/>
<dbReference type="BioMuta" id="SCYL3"/>
<dbReference type="DMDM" id="61214481"/>
<dbReference type="CPTAC" id="non-CPTAC-5625"/>
<dbReference type="jPOST" id="Q8IZE3"/>
<dbReference type="MassIVE" id="Q8IZE3"/>
<dbReference type="PaxDb" id="9606-ENSP00000356746"/>
<dbReference type="PeptideAtlas" id="Q8IZE3"/>
<dbReference type="ProteomicsDB" id="71333">
    <molecule id="Q8IZE3-1"/>
</dbReference>
<dbReference type="ProteomicsDB" id="71334">
    <molecule id="Q8IZE3-2"/>
</dbReference>
<dbReference type="Pumba" id="Q8IZE3"/>
<dbReference type="Antibodypedia" id="936">
    <property type="antibodies" value="249 antibodies from 23 providers"/>
</dbReference>
<dbReference type="DNASU" id="57147"/>
<dbReference type="Ensembl" id="ENST00000367770.5">
    <molecule id="Q8IZE3-1"/>
    <property type="protein sequence ID" value="ENSP00000356744.1"/>
    <property type="gene ID" value="ENSG00000000457.14"/>
</dbReference>
<dbReference type="Ensembl" id="ENST00000367771.11">
    <molecule id="Q8IZE3-2"/>
    <property type="protein sequence ID" value="ENSP00000356745.5"/>
    <property type="gene ID" value="ENSG00000000457.14"/>
</dbReference>
<dbReference type="Ensembl" id="ENST00000367772.8">
    <molecule id="Q8IZE3-1"/>
    <property type="protein sequence ID" value="ENSP00000356746.4"/>
    <property type="gene ID" value="ENSG00000000457.14"/>
</dbReference>
<dbReference type="GeneID" id="57147"/>
<dbReference type="KEGG" id="hsa:57147"/>
<dbReference type="MANE-Select" id="ENST00000367771.11">
    <molecule id="Q8IZE3-2"/>
    <property type="protein sequence ID" value="ENSP00000356745.5"/>
    <property type="RefSeq nucleotide sequence ID" value="NM_020423.7"/>
    <property type="RefSeq protein sequence ID" value="NP_065156.5"/>
</dbReference>
<dbReference type="UCSC" id="uc001ggs.5">
    <molecule id="Q8IZE3-1"/>
    <property type="organism name" value="human"/>
</dbReference>
<dbReference type="AGR" id="HGNC:19285"/>
<dbReference type="CTD" id="57147"/>
<dbReference type="GeneCards" id="SCYL3"/>
<dbReference type="HGNC" id="HGNC:19285">
    <property type="gene designation" value="SCYL3"/>
</dbReference>
<dbReference type="HPA" id="ENSG00000000457">
    <property type="expression patterns" value="Low tissue specificity"/>
</dbReference>
<dbReference type="MIM" id="608192">
    <property type="type" value="gene"/>
</dbReference>
<dbReference type="neXtProt" id="NX_Q8IZE3"/>
<dbReference type="OpenTargets" id="ENSG00000000457"/>
<dbReference type="PharmGKB" id="PA142670945"/>
<dbReference type="VEuPathDB" id="HostDB:ENSG00000000457"/>
<dbReference type="eggNOG" id="KOG1243">
    <property type="taxonomic scope" value="Eukaryota"/>
</dbReference>
<dbReference type="GeneTree" id="ENSGT00930000151043"/>
<dbReference type="InParanoid" id="Q8IZE3"/>
<dbReference type="OMA" id="HDPELDW"/>
<dbReference type="OrthoDB" id="9942861at2759"/>
<dbReference type="PAN-GO" id="Q8IZE3">
    <property type="GO annotations" value="0 GO annotations based on evolutionary models"/>
</dbReference>
<dbReference type="PhylomeDB" id="Q8IZE3"/>
<dbReference type="TreeFam" id="TF313435"/>
<dbReference type="PathwayCommons" id="Q8IZE3"/>
<dbReference type="SignaLink" id="Q8IZE3"/>
<dbReference type="BioGRID-ORCS" id="57147">
    <property type="hits" value="23 hits in 1190 CRISPR screens"/>
</dbReference>
<dbReference type="ChiTaRS" id="SCYL3">
    <property type="organism name" value="human"/>
</dbReference>
<dbReference type="GeneWiki" id="SCYL3"/>
<dbReference type="GenomeRNAi" id="57147"/>
<dbReference type="Pharos" id="Q8IZE3">
    <property type="development level" value="Tbio"/>
</dbReference>
<dbReference type="PRO" id="PR:Q8IZE3"/>
<dbReference type="Proteomes" id="UP000005640">
    <property type="component" value="Chromosome 1"/>
</dbReference>
<dbReference type="RNAct" id="Q8IZE3">
    <property type="molecule type" value="protein"/>
</dbReference>
<dbReference type="Bgee" id="ENSG00000000457">
    <property type="expression patterns" value="Expressed in buccal mucosa cell and 193 other cell types or tissues"/>
</dbReference>
<dbReference type="ExpressionAtlas" id="Q8IZE3">
    <property type="expression patterns" value="baseline and differential"/>
</dbReference>
<dbReference type="GO" id="GO:0005737">
    <property type="term" value="C:cytoplasm"/>
    <property type="evidence" value="ECO:0000314"/>
    <property type="project" value="UniProtKB"/>
</dbReference>
<dbReference type="GO" id="GO:0005829">
    <property type="term" value="C:cytosol"/>
    <property type="evidence" value="ECO:0000314"/>
    <property type="project" value="HPA"/>
</dbReference>
<dbReference type="GO" id="GO:0005783">
    <property type="term" value="C:endoplasmic reticulum"/>
    <property type="evidence" value="ECO:0000314"/>
    <property type="project" value="HPA"/>
</dbReference>
<dbReference type="GO" id="GO:0005794">
    <property type="term" value="C:Golgi apparatus"/>
    <property type="evidence" value="ECO:0000314"/>
    <property type="project" value="HPA"/>
</dbReference>
<dbReference type="GO" id="GO:0000139">
    <property type="term" value="C:Golgi membrane"/>
    <property type="evidence" value="ECO:0007669"/>
    <property type="project" value="Ensembl"/>
</dbReference>
<dbReference type="GO" id="GO:0030027">
    <property type="term" value="C:lamellipodium"/>
    <property type="evidence" value="ECO:0000314"/>
    <property type="project" value="UniProtKB"/>
</dbReference>
<dbReference type="GO" id="GO:0005524">
    <property type="term" value="F:ATP binding"/>
    <property type="evidence" value="ECO:0007669"/>
    <property type="project" value="InterPro"/>
</dbReference>
<dbReference type="GO" id="GO:0042802">
    <property type="term" value="F:identical protein binding"/>
    <property type="evidence" value="ECO:0007669"/>
    <property type="project" value="Ensembl"/>
</dbReference>
<dbReference type="GO" id="GO:0016477">
    <property type="term" value="P:cell migration"/>
    <property type="evidence" value="ECO:0000303"/>
    <property type="project" value="UniProtKB"/>
</dbReference>
<dbReference type="GO" id="GO:0006954">
    <property type="term" value="P:inflammatory response"/>
    <property type="evidence" value="ECO:0007669"/>
    <property type="project" value="Ensembl"/>
</dbReference>
<dbReference type="GO" id="GO:0048666">
    <property type="term" value="P:neuron development"/>
    <property type="evidence" value="ECO:0007669"/>
    <property type="project" value="Ensembl"/>
</dbReference>
<dbReference type="GO" id="GO:0008104">
    <property type="term" value="P:protein localization"/>
    <property type="evidence" value="ECO:0007669"/>
    <property type="project" value="Ensembl"/>
</dbReference>
<dbReference type="GO" id="GO:0021522">
    <property type="term" value="P:spinal cord motor neuron differentiation"/>
    <property type="evidence" value="ECO:0007669"/>
    <property type="project" value="Ensembl"/>
</dbReference>
<dbReference type="FunFam" id="1.25.10.10:FF:000359">
    <property type="entry name" value="Protein-associating with the carboxyl-terminal domain of ezrin"/>
    <property type="match status" value="1"/>
</dbReference>
<dbReference type="FunFam" id="3.30.200.20:FF:000298">
    <property type="entry name" value="Protein-associating with the carboxyl-terminal domain of ezrin"/>
    <property type="match status" value="1"/>
</dbReference>
<dbReference type="FunFam" id="1.10.510.10:FF:000546">
    <property type="entry name" value="SCY1 like pseudokinase 3"/>
    <property type="match status" value="1"/>
</dbReference>
<dbReference type="Gene3D" id="1.25.10.10">
    <property type="entry name" value="Leucine-rich Repeat Variant"/>
    <property type="match status" value="1"/>
</dbReference>
<dbReference type="Gene3D" id="3.30.200.20">
    <property type="entry name" value="Phosphorylase Kinase, domain 1"/>
    <property type="match status" value="1"/>
</dbReference>
<dbReference type="Gene3D" id="1.10.510.10">
    <property type="entry name" value="Transferase(Phosphotransferase) domain 1"/>
    <property type="match status" value="1"/>
</dbReference>
<dbReference type="InterPro" id="IPR011989">
    <property type="entry name" value="ARM-like"/>
</dbReference>
<dbReference type="InterPro" id="IPR016024">
    <property type="entry name" value="ARM-type_fold"/>
</dbReference>
<dbReference type="InterPro" id="IPR051177">
    <property type="entry name" value="CIK-Related_Protein"/>
</dbReference>
<dbReference type="InterPro" id="IPR021133">
    <property type="entry name" value="HEAT_type_2"/>
</dbReference>
<dbReference type="InterPro" id="IPR011009">
    <property type="entry name" value="Kinase-like_dom_sf"/>
</dbReference>
<dbReference type="InterPro" id="IPR000719">
    <property type="entry name" value="Prot_kinase_dom"/>
</dbReference>
<dbReference type="InterPro" id="IPR001245">
    <property type="entry name" value="Ser-Thr/Tyr_kinase_cat_dom"/>
</dbReference>
<dbReference type="PANTHER" id="PTHR12984:SF15">
    <property type="entry name" value="PROTEIN-ASSOCIATING WITH THE CARBOXYL-TERMINAL DOMAIN OF EZRIN"/>
    <property type="match status" value="1"/>
</dbReference>
<dbReference type="PANTHER" id="PTHR12984">
    <property type="entry name" value="SCY1-RELATED S/T PROTEIN KINASE-LIKE"/>
    <property type="match status" value="1"/>
</dbReference>
<dbReference type="Pfam" id="PF07714">
    <property type="entry name" value="PK_Tyr_Ser-Thr"/>
    <property type="match status" value="1"/>
</dbReference>
<dbReference type="SMART" id="SM00220">
    <property type="entry name" value="S_TKc"/>
    <property type="match status" value="1"/>
</dbReference>
<dbReference type="SUPFAM" id="SSF48371">
    <property type="entry name" value="ARM repeat"/>
    <property type="match status" value="1"/>
</dbReference>
<dbReference type="SUPFAM" id="SSF56112">
    <property type="entry name" value="Protein kinase-like (PK-like)"/>
    <property type="match status" value="1"/>
</dbReference>
<dbReference type="PROSITE" id="PS50077">
    <property type="entry name" value="HEAT_REPEAT"/>
    <property type="match status" value="1"/>
</dbReference>
<dbReference type="PROSITE" id="PS50011">
    <property type="entry name" value="PROTEIN_KINASE_DOM"/>
    <property type="match status" value="1"/>
</dbReference>
<feature type="initiator methionine" description="Removed" evidence="11">
    <location>
        <position position="1"/>
    </location>
</feature>
<feature type="chain" id="PRO_0000058167" description="Protein-associating with the carboxyl-terminal domain of ezrin">
    <location>
        <begin position="2"/>
        <end position="742"/>
    </location>
</feature>
<feature type="domain" description="Protein kinase" evidence="2">
    <location>
        <begin position="2"/>
        <end position="245"/>
    </location>
</feature>
<feature type="repeat" description="HEAT 1">
    <location>
        <begin position="199"/>
        <end position="238"/>
    </location>
</feature>
<feature type="repeat" description="HEAT 2">
    <location>
        <begin position="285"/>
        <end position="323"/>
    </location>
</feature>
<feature type="repeat" description="HEAT 3">
    <location>
        <begin position="333"/>
        <end position="370"/>
    </location>
</feature>
<feature type="repeat" description="HEAT 4">
    <location>
        <begin position="372"/>
        <end position="409"/>
    </location>
</feature>
<feature type="region of interest" description="Disordered" evidence="3">
    <location>
        <begin position="506"/>
        <end position="544"/>
    </location>
</feature>
<feature type="region of interest" description="Interaction with EZR" evidence="4">
    <location>
        <begin position="548"/>
        <end position="742"/>
    </location>
</feature>
<feature type="region of interest" description="Disordered" evidence="3">
    <location>
        <begin position="568"/>
        <end position="598"/>
    </location>
</feature>
<feature type="region of interest" description="Disordered" evidence="3">
    <location>
        <begin position="629"/>
        <end position="652"/>
    </location>
</feature>
<feature type="region of interest" description="Disordered" evidence="3">
    <location>
        <begin position="723"/>
        <end position="742"/>
    </location>
</feature>
<feature type="compositionally biased region" description="Acidic residues" evidence="3">
    <location>
        <begin position="529"/>
        <end position="539"/>
    </location>
</feature>
<feature type="modified residue" description="Phosphoserine" evidence="1">
    <location>
        <position position="439"/>
    </location>
</feature>
<feature type="modified residue" description="Phosphoserine" evidence="13">
    <location>
        <position position="707"/>
    </location>
</feature>
<feature type="lipid moiety-binding region" description="N-myristoyl glycine" evidence="12">
    <location>
        <position position="2"/>
    </location>
</feature>
<feature type="splice variant" id="VSP_013125" description="In isoform 2." evidence="8 9 10">
    <location>
        <begin position="438"/>
        <end position="491"/>
    </location>
</feature>
<feature type="sequence variant" id="VAR_051690" description="In dbSNP:rs12143301." evidence="6">
    <original>G</original>
    <variation>A</variation>
    <location>
        <position position="597"/>
    </location>
</feature>
<feature type="sequence variant" id="VAR_051691" description="In dbSNP:rs4656197." evidence="4 5 7">
    <original>Q</original>
    <variation>R</variation>
    <location>
        <position position="621"/>
    </location>
</feature>
<feature type="mutagenesis site" description="No Golgi targeting, accumulates in the cytoplasm." evidence="4">
    <original>GSENS</original>
    <variation>M</variation>
    <location>
        <begin position="2"/>
        <end position="6"/>
    </location>
</feature>
<feature type="sequence conflict" description="In Ref. 1; AAN23123/AAN41656." evidence="11" ref="1">
    <original>M</original>
    <variation>T</variation>
    <location>
        <position position="613"/>
    </location>
</feature>
<evidence type="ECO:0000250" key="1">
    <source>
        <dbReference type="UniProtKB" id="Q9DBQ7"/>
    </source>
</evidence>
<evidence type="ECO:0000255" key="2">
    <source>
        <dbReference type="PROSITE-ProRule" id="PRU00159"/>
    </source>
</evidence>
<evidence type="ECO:0000256" key="3">
    <source>
        <dbReference type="SAM" id="MobiDB-lite"/>
    </source>
</evidence>
<evidence type="ECO:0000269" key="4">
    <source>
    </source>
</evidence>
<evidence type="ECO:0000269" key="5">
    <source>
    </source>
</evidence>
<evidence type="ECO:0000269" key="6">
    <source>
    </source>
</evidence>
<evidence type="ECO:0000269" key="7">
    <source ref="5"/>
</evidence>
<evidence type="ECO:0000303" key="8">
    <source>
    </source>
</evidence>
<evidence type="ECO:0000303" key="9">
    <source>
    </source>
</evidence>
<evidence type="ECO:0000303" key="10">
    <source ref="2"/>
</evidence>
<evidence type="ECO:0000305" key="11"/>
<evidence type="ECO:0000305" key="12">
    <source>
    </source>
</evidence>
<evidence type="ECO:0007744" key="13">
    <source>
    </source>
</evidence>
<proteinExistence type="evidence at protein level"/>
<accession>Q8IZE3</accession>
<accession>A8K8Z2</accession>
<accession>Q5THA6</accession>
<accession>Q5THA8</accession>
<accession>Q8IZN9</accession>
<accession>Q96C56</accession>
<accession>Q9UBK6</accession>
<organism>
    <name type="scientific">Homo sapiens</name>
    <name type="common">Human</name>
    <dbReference type="NCBI Taxonomy" id="9606"/>
    <lineage>
        <taxon>Eukaryota</taxon>
        <taxon>Metazoa</taxon>
        <taxon>Chordata</taxon>
        <taxon>Craniata</taxon>
        <taxon>Vertebrata</taxon>
        <taxon>Euteleostomi</taxon>
        <taxon>Mammalia</taxon>
        <taxon>Eutheria</taxon>
        <taxon>Euarchontoglires</taxon>
        <taxon>Primates</taxon>
        <taxon>Haplorrhini</taxon>
        <taxon>Catarrhini</taxon>
        <taxon>Hominidae</taxon>
        <taxon>Homo</taxon>
    </lineage>
</organism>
<sequence>MGSENSALKSYTLREPPFTLPSGLAVYPAVLQDGKFASVFVYKRENEDKVNKAAKHLKTLRHPCLLRFLSCTVEADGIHLVTERVQPLEVALETLSSAEVCAGIYDILLALIFLHDRGHLTHNNVCLSSVFVSEDGHWKLGGMETVCKVSQATPEFLRSIQSIRDPASIPPEEMSPEFTTLPECHGHARDAFSFGTLVESLLTILNEQVSADVLSSFQQTLHSTLLNPIPKCRPALCTLLSHDFFRNDFLEVVNFLKSLTLKSEEEKTEFFKFLLDRVSCLSEELIASRLVPLLLNQLVFAEPVAVKSFLPYLLGPKKDHAQGETPCLLSPALFQSRVIPVLLQLFEVHEEHVRMVLLSHIEAYVEHFTQEQLKKVILPQVLLGLRDTSDSIVAITLHSLAVLVSLLGPEVVVGGERTKIFKRTAPSFTKNTDLSLEDSPMCVVCSHHSQISPILENPFSSIFPKCFFSGSTPINSKKHIQRDYYNTLLQTGDPFSQPIKFPINGLSDVKNTSEDSENFPSSSKKSEEWPDWSEPEEPENQTVNIQIWPREPCDDVKSQCTTLDVEESSWDDCEPSSLDTKVNPGGGITATKPVTSGEQKPIPALLSLTEESMPWKSSLPQKISLVQRGDDADQIEPPKVSSQERPLKVPSELGLGEEFTIQVKKKPVKDPEMDWFADMIPEIKPSAAFLILPELRTEMVPKKDDVSPVMQFSSKFAAAEITEGEAEGWEEEGELNWEDNNW</sequence>
<reference key="1">
    <citation type="journal article" date="2003" name="Exp. Cell Res.">
        <title>PACE-1, a novel protein that interacts with the C-terminal domain of ezrin.</title>
        <authorList>
            <person name="Sullivan A."/>
            <person name="Uff C.R."/>
            <person name="Isacke C.M."/>
            <person name="Thorne R.F."/>
        </authorList>
    </citation>
    <scope>NUCLEOTIDE SEQUENCE [MRNA] (ISOFORMS 1 AND 2)</scope>
    <scope>FUNCTION</scope>
    <scope>INTERACTION WITH EZR</scope>
    <scope>TISSUE SPECIFICITY</scope>
    <scope>SUBCELLULAR LOCATION</scope>
    <scope>PHOSPHORYLATION</scope>
    <scope>MYRISTOYLATION AT GLY-2</scope>
    <scope>MUTAGENESIS OF 2-GLU--SER-6</scope>
    <scope>VARIANT ARG-621</scope>
    <source>
        <tissue>Kidney</tissue>
    </source>
</reference>
<reference key="2">
    <citation type="submission" date="1999-09" db="EMBL/GenBank/DDBJ databases">
        <authorList>
            <person name="Rhodes S."/>
            <person name="Huckle E."/>
        </authorList>
    </citation>
    <scope>NUCLEOTIDE SEQUENCE [LARGE SCALE MRNA] (ISOFORM 2)</scope>
</reference>
<reference key="3">
    <citation type="journal article" date="2004" name="Nat. Genet.">
        <title>Complete sequencing and characterization of 21,243 full-length human cDNAs.</title>
        <authorList>
            <person name="Ota T."/>
            <person name="Suzuki Y."/>
            <person name="Nishikawa T."/>
            <person name="Otsuki T."/>
            <person name="Sugiyama T."/>
            <person name="Irie R."/>
            <person name="Wakamatsu A."/>
            <person name="Hayashi K."/>
            <person name="Sato H."/>
            <person name="Nagai K."/>
            <person name="Kimura K."/>
            <person name="Makita H."/>
            <person name="Sekine M."/>
            <person name="Obayashi M."/>
            <person name="Nishi T."/>
            <person name="Shibahara T."/>
            <person name="Tanaka T."/>
            <person name="Ishii S."/>
            <person name="Yamamoto J."/>
            <person name="Saito K."/>
            <person name="Kawai Y."/>
            <person name="Isono Y."/>
            <person name="Nakamura Y."/>
            <person name="Nagahari K."/>
            <person name="Murakami K."/>
            <person name="Yasuda T."/>
            <person name="Iwayanagi T."/>
            <person name="Wagatsuma M."/>
            <person name="Shiratori A."/>
            <person name="Sudo H."/>
            <person name="Hosoiri T."/>
            <person name="Kaku Y."/>
            <person name="Kodaira H."/>
            <person name="Kondo H."/>
            <person name="Sugawara M."/>
            <person name="Takahashi M."/>
            <person name="Kanda K."/>
            <person name="Yokoi T."/>
            <person name="Furuya T."/>
            <person name="Kikkawa E."/>
            <person name="Omura Y."/>
            <person name="Abe K."/>
            <person name="Kamihara K."/>
            <person name="Katsuta N."/>
            <person name="Sato K."/>
            <person name="Tanikawa M."/>
            <person name="Yamazaki M."/>
            <person name="Ninomiya K."/>
            <person name="Ishibashi T."/>
            <person name="Yamashita H."/>
            <person name="Murakawa K."/>
            <person name="Fujimori K."/>
            <person name="Tanai H."/>
            <person name="Kimata M."/>
            <person name="Watanabe M."/>
            <person name="Hiraoka S."/>
            <person name="Chiba Y."/>
            <person name="Ishida S."/>
            <person name="Ono Y."/>
            <person name="Takiguchi S."/>
            <person name="Watanabe S."/>
            <person name="Yosida M."/>
            <person name="Hotuta T."/>
            <person name="Kusano J."/>
            <person name="Kanehori K."/>
            <person name="Takahashi-Fujii A."/>
            <person name="Hara H."/>
            <person name="Tanase T.-O."/>
            <person name="Nomura Y."/>
            <person name="Togiya S."/>
            <person name="Komai F."/>
            <person name="Hara R."/>
            <person name="Takeuchi K."/>
            <person name="Arita M."/>
            <person name="Imose N."/>
            <person name="Musashino K."/>
            <person name="Yuuki H."/>
            <person name="Oshima A."/>
            <person name="Sasaki N."/>
            <person name="Aotsuka S."/>
            <person name="Yoshikawa Y."/>
            <person name="Matsunawa H."/>
            <person name="Ichihara T."/>
            <person name="Shiohata N."/>
            <person name="Sano S."/>
            <person name="Moriya S."/>
            <person name="Momiyama H."/>
            <person name="Satoh N."/>
            <person name="Takami S."/>
            <person name="Terashima Y."/>
            <person name="Suzuki O."/>
            <person name="Nakagawa S."/>
            <person name="Senoh A."/>
            <person name="Mizoguchi H."/>
            <person name="Goto Y."/>
            <person name="Shimizu F."/>
            <person name="Wakebe H."/>
            <person name="Hishigaki H."/>
            <person name="Watanabe T."/>
            <person name="Sugiyama A."/>
            <person name="Takemoto M."/>
            <person name="Kawakami B."/>
            <person name="Yamazaki M."/>
            <person name="Watanabe K."/>
            <person name="Kumagai A."/>
            <person name="Itakura S."/>
            <person name="Fukuzumi Y."/>
            <person name="Fujimori Y."/>
            <person name="Komiyama M."/>
            <person name="Tashiro H."/>
            <person name="Tanigami A."/>
            <person name="Fujiwara T."/>
            <person name="Ono T."/>
            <person name="Yamada K."/>
            <person name="Fujii Y."/>
            <person name="Ozaki K."/>
            <person name="Hirao M."/>
            <person name="Ohmori Y."/>
            <person name="Kawabata A."/>
            <person name="Hikiji T."/>
            <person name="Kobatake N."/>
            <person name="Inagaki H."/>
            <person name="Ikema Y."/>
            <person name="Okamoto S."/>
            <person name="Okitani R."/>
            <person name="Kawakami T."/>
            <person name="Noguchi S."/>
            <person name="Itoh T."/>
            <person name="Shigeta K."/>
            <person name="Senba T."/>
            <person name="Matsumura K."/>
            <person name="Nakajima Y."/>
            <person name="Mizuno T."/>
            <person name="Morinaga M."/>
            <person name="Sasaki M."/>
            <person name="Togashi T."/>
            <person name="Oyama M."/>
            <person name="Hata H."/>
            <person name="Watanabe M."/>
            <person name="Komatsu T."/>
            <person name="Mizushima-Sugano J."/>
            <person name="Satoh T."/>
            <person name="Shirai Y."/>
            <person name="Takahashi Y."/>
            <person name="Nakagawa K."/>
            <person name="Okumura K."/>
            <person name="Nagase T."/>
            <person name="Nomura N."/>
            <person name="Kikuchi H."/>
            <person name="Masuho Y."/>
            <person name="Yamashita R."/>
            <person name="Nakai K."/>
            <person name="Yada T."/>
            <person name="Nakamura Y."/>
            <person name="Ohara O."/>
            <person name="Isogai T."/>
            <person name="Sugano S."/>
        </authorList>
    </citation>
    <scope>NUCLEOTIDE SEQUENCE [LARGE SCALE MRNA] (ISOFORM 1)</scope>
    <scope>VARIANT ARG-621</scope>
    <source>
        <tissue>Testis</tissue>
    </source>
</reference>
<reference key="4">
    <citation type="journal article" date="2006" name="Nature">
        <title>The DNA sequence and biological annotation of human chromosome 1.</title>
        <authorList>
            <person name="Gregory S.G."/>
            <person name="Barlow K.F."/>
            <person name="McLay K.E."/>
            <person name="Kaul R."/>
            <person name="Swarbreck D."/>
            <person name="Dunham A."/>
            <person name="Scott C.E."/>
            <person name="Howe K.L."/>
            <person name="Woodfine K."/>
            <person name="Spencer C.C.A."/>
            <person name="Jones M.C."/>
            <person name="Gillson C."/>
            <person name="Searle S."/>
            <person name="Zhou Y."/>
            <person name="Kokocinski F."/>
            <person name="McDonald L."/>
            <person name="Evans R."/>
            <person name="Phillips K."/>
            <person name="Atkinson A."/>
            <person name="Cooper R."/>
            <person name="Jones C."/>
            <person name="Hall R.E."/>
            <person name="Andrews T.D."/>
            <person name="Lloyd C."/>
            <person name="Ainscough R."/>
            <person name="Almeida J.P."/>
            <person name="Ambrose K.D."/>
            <person name="Anderson F."/>
            <person name="Andrew R.W."/>
            <person name="Ashwell R.I.S."/>
            <person name="Aubin K."/>
            <person name="Babbage A.K."/>
            <person name="Bagguley C.L."/>
            <person name="Bailey J."/>
            <person name="Beasley H."/>
            <person name="Bethel G."/>
            <person name="Bird C.P."/>
            <person name="Bray-Allen S."/>
            <person name="Brown J.Y."/>
            <person name="Brown A.J."/>
            <person name="Buckley D."/>
            <person name="Burton J."/>
            <person name="Bye J."/>
            <person name="Carder C."/>
            <person name="Chapman J.C."/>
            <person name="Clark S.Y."/>
            <person name="Clarke G."/>
            <person name="Clee C."/>
            <person name="Cobley V."/>
            <person name="Collier R.E."/>
            <person name="Corby N."/>
            <person name="Coville G.J."/>
            <person name="Davies J."/>
            <person name="Deadman R."/>
            <person name="Dunn M."/>
            <person name="Earthrowl M."/>
            <person name="Ellington A.G."/>
            <person name="Errington H."/>
            <person name="Frankish A."/>
            <person name="Frankland J."/>
            <person name="French L."/>
            <person name="Garner P."/>
            <person name="Garnett J."/>
            <person name="Gay L."/>
            <person name="Ghori M.R.J."/>
            <person name="Gibson R."/>
            <person name="Gilby L.M."/>
            <person name="Gillett W."/>
            <person name="Glithero R.J."/>
            <person name="Grafham D.V."/>
            <person name="Griffiths C."/>
            <person name="Griffiths-Jones S."/>
            <person name="Grocock R."/>
            <person name="Hammond S."/>
            <person name="Harrison E.S.I."/>
            <person name="Hart E."/>
            <person name="Haugen E."/>
            <person name="Heath P.D."/>
            <person name="Holmes S."/>
            <person name="Holt K."/>
            <person name="Howden P.J."/>
            <person name="Hunt A.R."/>
            <person name="Hunt S.E."/>
            <person name="Hunter G."/>
            <person name="Isherwood J."/>
            <person name="James R."/>
            <person name="Johnson C."/>
            <person name="Johnson D."/>
            <person name="Joy A."/>
            <person name="Kay M."/>
            <person name="Kershaw J.K."/>
            <person name="Kibukawa M."/>
            <person name="Kimberley A.M."/>
            <person name="King A."/>
            <person name="Knights A.J."/>
            <person name="Lad H."/>
            <person name="Laird G."/>
            <person name="Lawlor S."/>
            <person name="Leongamornlert D.A."/>
            <person name="Lloyd D.M."/>
            <person name="Loveland J."/>
            <person name="Lovell J."/>
            <person name="Lush M.J."/>
            <person name="Lyne R."/>
            <person name="Martin S."/>
            <person name="Mashreghi-Mohammadi M."/>
            <person name="Matthews L."/>
            <person name="Matthews N.S.W."/>
            <person name="McLaren S."/>
            <person name="Milne S."/>
            <person name="Mistry S."/>
            <person name="Moore M.J.F."/>
            <person name="Nickerson T."/>
            <person name="O'Dell C.N."/>
            <person name="Oliver K."/>
            <person name="Palmeiri A."/>
            <person name="Palmer S.A."/>
            <person name="Parker A."/>
            <person name="Patel D."/>
            <person name="Pearce A.V."/>
            <person name="Peck A.I."/>
            <person name="Pelan S."/>
            <person name="Phelps K."/>
            <person name="Phillimore B.J."/>
            <person name="Plumb R."/>
            <person name="Rajan J."/>
            <person name="Raymond C."/>
            <person name="Rouse G."/>
            <person name="Saenphimmachak C."/>
            <person name="Sehra H.K."/>
            <person name="Sheridan E."/>
            <person name="Shownkeen R."/>
            <person name="Sims S."/>
            <person name="Skuce C.D."/>
            <person name="Smith M."/>
            <person name="Steward C."/>
            <person name="Subramanian S."/>
            <person name="Sycamore N."/>
            <person name="Tracey A."/>
            <person name="Tromans A."/>
            <person name="Van Helmond Z."/>
            <person name="Wall M."/>
            <person name="Wallis J.M."/>
            <person name="White S."/>
            <person name="Whitehead S.L."/>
            <person name="Wilkinson J.E."/>
            <person name="Willey D.L."/>
            <person name="Williams H."/>
            <person name="Wilming L."/>
            <person name="Wray P.W."/>
            <person name="Wu Z."/>
            <person name="Coulson A."/>
            <person name="Vaudin M."/>
            <person name="Sulston J.E."/>
            <person name="Durbin R.M."/>
            <person name="Hubbard T."/>
            <person name="Wooster R."/>
            <person name="Dunham I."/>
            <person name="Carter N.P."/>
            <person name="McVean G."/>
            <person name="Ross M.T."/>
            <person name="Harrow J."/>
            <person name="Olson M.V."/>
            <person name="Beck S."/>
            <person name="Rogers J."/>
            <person name="Bentley D.R."/>
        </authorList>
    </citation>
    <scope>NUCLEOTIDE SEQUENCE [LARGE SCALE GENOMIC DNA]</scope>
</reference>
<reference key="5">
    <citation type="submission" date="2005-07" db="EMBL/GenBank/DDBJ databases">
        <authorList>
            <person name="Mural R.J."/>
            <person name="Istrail S."/>
            <person name="Sutton G.G."/>
            <person name="Florea L."/>
            <person name="Halpern A.L."/>
            <person name="Mobarry C.M."/>
            <person name="Lippert R."/>
            <person name="Walenz B."/>
            <person name="Shatkay H."/>
            <person name="Dew I."/>
            <person name="Miller J.R."/>
            <person name="Flanigan M.J."/>
            <person name="Edwards N.J."/>
            <person name="Bolanos R."/>
            <person name="Fasulo D."/>
            <person name="Halldorsson B.V."/>
            <person name="Hannenhalli S."/>
            <person name="Turner R."/>
            <person name="Yooseph S."/>
            <person name="Lu F."/>
            <person name="Nusskern D.R."/>
            <person name="Shue B.C."/>
            <person name="Zheng X.H."/>
            <person name="Zhong F."/>
            <person name="Delcher A.L."/>
            <person name="Huson D.H."/>
            <person name="Kravitz S.A."/>
            <person name="Mouchard L."/>
            <person name="Reinert K."/>
            <person name="Remington K.A."/>
            <person name="Clark A.G."/>
            <person name="Waterman M.S."/>
            <person name="Eichler E.E."/>
            <person name="Adams M.D."/>
            <person name="Hunkapiller M.W."/>
            <person name="Myers E.W."/>
            <person name="Venter J.C."/>
        </authorList>
    </citation>
    <scope>NUCLEOTIDE SEQUENCE [LARGE SCALE GENOMIC DNA]</scope>
    <scope>VARIANT ARG-621</scope>
</reference>
<reference key="6">
    <citation type="journal article" date="2004" name="Genome Res.">
        <title>The status, quality, and expansion of the NIH full-length cDNA project: the Mammalian Gene Collection (MGC).</title>
        <authorList>
            <consortium name="The MGC Project Team"/>
        </authorList>
    </citation>
    <scope>NUCLEOTIDE SEQUENCE [LARGE SCALE MRNA] (ISOFORM 2)</scope>
    <scope>VARIANT ALA-597</scope>
    <source>
        <tissue>B-cell</tissue>
    </source>
</reference>
<reference key="7">
    <citation type="journal article" date="2013" name="J. Proteome Res.">
        <title>Toward a comprehensive characterization of a human cancer cell phosphoproteome.</title>
        <authorList>
            <person name="Zhou H."/>
            <person name="Di Palma S."/>
            <person name="Preisinger C."/>
            <person name="Peng M."/>
            <person name="Polat A.N."/>
            <person name="Heck A.J."/>
            <person name="Mohammed S."/>
        </authorList>
    </citation>
    <scope>PHOSPHORYLATION [LARGE SCALE ANALYSIS] AT SER-707</scope>
    <scope>IDENTIFICATION BY MASS SPECTROMETRY [LARGE SCALE ANALYSIS]</scope>
    <source>
        <tissue>Cervix carcinoma</tissue>
        <tissue>Erythroleukemia</tissue>
    </source>
</reference>
<reference key="8">
    <citation type="journal article" date="2014" name="J. Proteomics">
        <title>An enzyme assisted RP-RPLC approach for in-depth analysis of human liver phosphoproteome.</title>
        <authorList>
            <person name="Bian Y."/>
            <person name="Song C."/>
            <person name="Cheng K."/>
            <person name="Dong M."/>
            <person name="Wang F."/>
            <person name="Huang J."/>
            <person name="Sun D."/>
            <person name="Wang L."/>
            <person name="Ye M."/>
            <person name="Zou H."/>
        </authorList>
    </citation>
    <scope>IDENTIFICATION BY MASS SPECTROMETRY [LARGE SCALE ANALYSIS]</scope>
    <source>
        <tissue>Liver</tissue>
    </source>
</reference>